<gene>
    <name evidence="1" type="primary">rpl4</name>
    <name type="ordered locus">PF1824</name>
</gene>
<comment type="function">
    <text evidence="1">One of the primary rRNA binding proteins, this protein initially binds near the 5'-end of the 23S rRNA. It is important during the early stages of 50S assembly. It makes multiple contacts with different domains of the 23S rRNA in the assembled 50S subunit and ribosome.</text>
</comment>
<comment type="function">
    <text evidence="1">Forms part of the polypeptide exit tunnel.</text>
</comment>
<comment type="subunit">
    <text evidence="1 2">Part of the 50S ribosomal subunit.</text>
</comment>
<comment type="similarity">
    <text evidence="1">Belongs to the universal ribosomal protein uL4 family.</text>
</comment>
<proteinExistence type="evidence at protein level"/>
<evidence type="ECO:0000255" key="1">
    <source>
        <dbReference type="HAMAP-Rule" id="MF_01328"/>
    </source>
</evidence>
<evidence type="ECO:0000269" key="2">
    <source>
    </source>
</evidence>
<evidence type="ECO:0007744" key="3">
    <source>
        <dbReference type="PDB" id="4V6U"/>
    </source>
</evidence>
<reference key="1">
    <citation type="journal article" date="1999" name="Genetics">
        <title>Divergence of the hyperthermophilic archaea Pyrococcus furiosus and P. horikoshii inferred from complete genomic sequences.</title>
        <authorList>
            <person name="Maeder D.L."/>
            <person name="Weiss R.B."/>
            <person name="Dunn D.M."/>
            <person name="Cherry J.L."/>
            <person name="Gonzalez J.M."/>
            <person name="DiRuggiero J."/>
            <person name="Robb F.T."/>
        </authorList>
    </citation>
    <scope>NUCLEOTIDE SEQUENCE [LARGE SCALE GENOMIC DNA]</scope>
    <source>
        <strain>ATCC 43587 / DSM 3638 / JCM 8422 / Vc1</strain>
    </source>
</reference>
<reference evidence="3" key="2">
    <citation type="journal article" date="2013" name="Nucleic Acids Res.">
        <title>Promiscuous behaviour of archaeal ribosomal proteins: implications for eukaryotic ribosome evolution.</title>
        <authorList>
            <person name="Armache J.P."/>
            <person name="Anger A.M."/>
            <person name="Marquez V."/>
            <person name="Franckenberg S."/>
            <person name="Frohlich T."/>
            <person name="Villa E."/>
            <person name="Berninghausen O."/>
            <person name="Thomm M."/>
            <person name="Arnold G.J."/>
            <person name="Beckmann R."/>
            <person name="Wilson D.N."/>
        </authorList>
    </citation>
    <scope>STRUCTURE BY ELECTRON MICROSCOPY (6.60 ANGSTROMS) IN THE 70S RIBOSOME</scope>
    <scope>SUBUNIT</scope>
</reference>
<accession>Q8TZZ9</accession>
<protein>
    <recommendedName>
        <fullName evidence="1">Large ribosomal subunit protein uL4</fullName>
    </recommendedName>
    <alternativeName>
        <fullName>50S ribosomal protein L4</fullName>
    </alternativeName>
</protein>
<feature type="chain" id="PRO_0000129340" description="Large ribosomal subunit protein uL4">
    <location>
        <begin position="1"/>
        <end position="255"/>
    </location>
</feature>
<dbReference type="EMBL" id="AE009950">
    <property type="protein sequence ID" value="AAL81948.1"/>
    <property type="molecule type" value="Genomic_DNA"/>
</dbReference>
<dbReference type="PDB" id="4V4N">
    <property type="method" value="EM"/>
    <property type="resolution" value="9.00 A"/>
    <property type="chains" value="D=1-255"/>
</dbReference>
<dbReference type="PDB" id="4V6U">
    <property type="method" value="EM"/>
    <property type="resolution" value="6.60 A"/>
    <property type="chains" value="BD=1-255"/>
</dbReference>
<dbReference type="PDBsum" id="4V4N"/>
<dbReference type="PDBsum" id="4V6U"/>
<dbReference type="SMR" id="Q8TZZ9"/>
<dbReference type="STRING" id="186497.PF1824"/>
<dbReference type="PaxDb" id="186497-PF1824"/>
<dbReference type="KEGG" id="pfu:PF1824"/>
<dbReference type="PATRIC" id="fig|186497.12.peg.1895"/>
<dbReference type="eggNOG" id="arCOG04071">
    <property type="taxonomic scope" value="Archaea"/>
</dbReference>
<dbReference type="HOGENOM" id="CLU_026535_0_0_2"/>
<dbReference type="OrthoDB" id="10737at2157"/>
<dbReference type="PhylomeDB" id="Q8TZZ9"/>
<dbReference type="Proteomes" id="UP000001013">
    <property type="component" value="Chromosome"/>
</dbReference>
<dbReference type="GO" id="GO:1990904">
    <property type="term" value="C:ribonucleoprotein complex"/>
    <property type="evidence" value="ECO:0007669"/>
    <property type="project" value="UniProtKB-KW"/>
</dbReference>
<dbReference type="GO" id="GO:0005840">
    <property type="term" value="C:ribosome"/>
    <property type="evidence" value="ECO:0007669"/>
    <property type="project" value="UniProtKB-KW"/>
</dbReference>
<dbReference type="GO" id="GO:0019843">
    <property type="term" value="F:rRNA binding"/>
    <property type="evidence" value="ECO:0007669"/>
    <property type="project" value="UniProtKB-UniRule"/>
</dbReference>
<dbReference type="GO" id="GO:0003735">
    <property type="term" value="F:structural constituent of ribosome"/>
    <property type="evidence" value="ECO:0007669"/>
    <property type="project" value="InterPro"/>
</dbReference>
<dbReference type="GO" id="GO:0006412">
    <property type="term" value="P:translation"/>
    <property type="evidence" value="ECO:0007669"/>
    <property type="project" value="UniProtKB-UniRule"/>
</dbReference>
<dbReference type="FunFam" id="3.40.1370.10:FF:000011">
    <property type="entry name" value="50S ribosomal protein L4"/>
    <property type="match status" value="1"/>
</dbReference>
<dbReference type="Gene3D" id="3.40.1370.10">
    <property type="match status" value="1"/>
</dbReference>
<dbReference type="HAMAP" id="MF_01328_A">
    <property type="entry name" value="Ribosomal_uL4_A"/>
    <property type="match status" value="1"/>
</dbReference>
<dbReference type="InterPro" id="IPR002136">
    <property type="entry name" value="Ribosomal_uL4"/>
</dbReference>
<dbReference type="InterPro" id="IPR023574">
    <property type="entry name" value="Ribosomal_uL4_dom_sf"/>
</dbReference>
<dbReference type="InterPro" id="IPR013000">
    <property type="entry name" value="Ribosomal_uL4_euk/arc_CS"/>
</dbReference>
<dbReference type="InterPro" id="IPR045240">
    <property type="entry name" value="Ribosomal_uL4_euk/arch"/>
</dbReference>
<dbReference type="InterPro" id="IPR019970">
    <property type="entry name" value="Ribosomall_uL4-arc"/>
</dbReference>
<dbReference type="NCBIfam" id="TIGR03672">
    <property type="entry name" value="rpl4p_arch"/>
    <property type="match status" value="1"/>
</dbReference>
<dbReference type="PANTHER" id="PTHR19431">
    <property type="entry name" value="60S RIBOSOMAL PROTEIN L4"/>
    <property type="match status" value="1"/>
</dbReference>
<dbReference type="Pfam" id="PF00573">
    <property type="entry name" value="Ribosomal_L4"/>
    <property type="match status" value="1"/>
</dbReference>
<dbReference type="SUPFAM" id="SSF52166">
    <property type="entry name" value="Ribosomal protein L4"/>
    <property type="match status" value="1"/>
</dbReference>
<dbReference type="PROSITE" id="PS00939">
    <property type="entry name" value="RIBOSOMAL_L1E"/>
    <property type="match status" value="1"/>
</dbReference>
<name>RL4_PYRFU</name>
<keyword id="KW-0002">3D-structure</keyword>
<keyword id="KW-1185">Reference proteome</keyword>
<keyword id="KW-0687">Ribonucleoprotein</keyword>
<keyword id="KW-0689">Ribosomal protein</keyword>
<keyword id="KW-0694">RNA-binding</keyword>
<keyword id="KW-0699">rRNA-binding</keyword>
<organism>
    <name type="scientific">Pyrococcus furiosus (strain ATCC 43587 / DSM 3638 / JCM 8422 / Vc1)</name>
    <dbReference type="NCBI Taxonomy" id="186497"/>
    <lineage>
        <taxon>Archaea</taxon>
        <taxon>Methanobacteriati</taxon>
        <taxon>Methanobacteriota</taxon>
        <taxon>Thermococci</taxon>
        <taxon>Thermococcales</taxon>
        <taxon>Thermococcaceae</taxon>
        <taxon>Pyrococcus</taxon>
    </lineage>
</organism>
<sequence length="255" mass="28709">MKVKVFDLNGQPVGEIELPKVFFTPFRPDLIRRAVIASWTHRIQPQGRDPMAGKRRVTENIGKGHSMARVERLKTPPRYAAFVPFARGGRRTHPPKVEKIIWEDINKKEKRLALMSAIAATANYDLVRARGHIIDNVPQLPLIVVDDLQKVQKTRETREIFKKLGIWDDIVRAKEKSGVRAGKGKMRGRRYKKAKGPLIVVGKNEGIVLGARNHPGVDVVVVDNLGVEHLAPGTHPGRLTVWTVSAIERLRELYG</sequence>